<comment type="catalytic activity">
    <reaction evidence="1">
        <text>thymidine + ATP = dTMP + ADP + H(+)</text>
        <dbReference type="Rhea" id="RHEA:19129"/>
        <dbReference type="ChEBI" id="CHEBI:15378"/>
        <dbReference type="ChEBI" id="CHEBI:17748"/>
        <dbReference type="ChEBI" id="CHEBI:30616"/>
        <dbReference type="ChEBI" id="CHEBI:63528"/>
        <dbReference type="ChEBI" id="CHEBI:456216"/>
        <dbReference type="EC" id="2.7.1.21"/>
    </reaction>
</comment>
<comment type="subunit">
    <text evidence="1">Homotetramer.</text>
</comment>
<comment type="subcellular location">
    <subcellularLocation>
        <location evidence="1">Cytoplasm</location>
    </subcellularLocation>
</comment>
<comment type="similarity">
    <text evidence="1">Belongs to the thymidine kinase family.</text>
</comment>
<sequence>MEIITQDGWLEVITGCMFSGKTEELVRRLRRAVIAKKETIAIKPALDTRYDLVAVVSHSGFSFNAIPVEDPKSILGMAKDAEVVGIDEAQFFTGELVPVIRELLQNKKRVIVAGLDLDFRGEPFGIMPTLLALADEVTKLHAICSVCGNIATKTQRLINGRPARYDDPTILVGGLETYEARCNLHHEVPGKTLTLFKE</sequence>
<organism>
    <name type="scientific">Coprothermobacter proteolyticus (strain ATCC 35245 / DSM 5265 / OCM 4 / BT)</name>
    <dbReference type="NCBI Taxonomy" id="309798"/>
    <lineage>
        <taxon>Bacteria</taxon>
        <taxon>Pseudomonadati</taxon>
        <taxon>Coprothermobacterota</taxon>
        <taxon>Coprothermobacteria</taxon>
        <taxon>Coprothermobacterales</taxon>
        <taxon>Coprothermobacteraceae</taxon>
        <taxon>Coprothermobacter</taxon>
    </lineage>
</organism>
<protein>
    <recommendedName>
        <fullName evidence="1">Thymidine kinase</fullName>
        <ecNumber evidence="1">2.7.1.21</ecNumber>
    </recommendedName>
</protein>
<gene>
    <name evidence="1" type="primary">tdk</name>
    <name type="ordered locus">COPRO5265_0834</name>
</gene>
<evidence type="ECO:0000255" key="1">
    <source>
        <dbReference type="HAMAP-Rule" id="MF_00124"/>
    </source>
</evidence>
<feature type="chain" id="PRO_1000095431" description="Thymidine kinase">
    <location>
        <begin position="1"/>
        <end position="198"/>
    </location>
</feature>
<feature type="active site" description="Proton acceptor" evidence="1">
    <location>
        <position position="88"/>
    </location>
</feature>
<feature type="binding site" evidence="1">
    <location>
        <begin position="15"/>
        <end position="22"/>
    </location>
    <ligand>
        <name>ATP</name>
        <dbReference type="ChEBI" id="CHEBI:30616"/>
    </ligand>
</feature>
<feature type="binding site" evidence="1">
    <location>
        <begin position="87"/>
        <end position="90"/>
    </location>
    <ligand>
        <name>ATP</name>
        <dbReference type="ChEBI" id="CHEBI:30616"/>
    </ligand>
</feature>
<feature type="binding site" evidence="1">
    <location>
        <position position="144"/>
    </location>
    <ligand>
        <name>Zn(2+)</name>
        <dbReference type="ChEBI" id="CHEBI:29105"/>
    </ligand>
</feature>
<feature type="binding site" evidence="1">
    <location>
        <position position="147"/>
    </location>
    <ligand>
        <name>Zn(2+)</name>
        <dbReference type="ChEBI" id="CHEBI:29105"/>
    </ligand>
</feature>
<feature type="binding site" evidence="1">
    <location>
        <position position="182"/>
    </location>
    <ligand>
        <name>Zn(2+)</name>
        <dbReference type="ChEBI" id="CHEBI:29105"/>
    </ligand>
</feature>
<feature type="binding site" evidence="1">
    <location>
        <position position="185"/>
    </location>
    <ligand>
        <name>Zn(2+)</name>
        <dbReference type="ChEBI" id="CHEBI:29105"/>
    </ligand>
</feature>
<dbReference type="EC" id="2.7.1.21" evidence="1"/>
<dbReference type="EMBL" id="CP001145">
    <property type="protein sequence ID" value="ACI17535.1"/>
    <property type="molecule type" value="Genomic_DNA"/>
</dbReference>
<dbReference type="RefSeq" id="WP_012544187.1">
    <property type="nucleotide sequence ID" value="NC_011295.1"/>
</dbReference>
<dbReference type="SMR" id="B5Y8S5"/>
<dbReference type="STRING" id="309798.COPRO5265_0834"/>
<dbReference type="KEGG" id="cpo:COPRO5265_0834"/>
<dbReference type="eggNOG" id="COG1435">
    <property type="taxonomic scope" value="Bacteria"/>
</dbReference>
<dbReference type="HOGENOM" id="CLU_064400_3_0_9"/>
<dbReference type="OrthoDB" id="9781579at2"/>
<dbReference type="Proteomes" id="UP000001732">
    <property type="component" value="Chromosome"/>
</dbReference>
<dbReference type="GO" id="GO:0005829">
    <property type="term" value="C:cytosol"/>
    <property type="evidence" value="ECO:0007669"/>
    <property type="project" value="TreeGrafter"/>
</dbReference>
<dbReference type="GO" id="GO:0005524">
    <property type="term" value="F:ATP binding"/>
    <property type="evidence" value="ECO:0007669"/>
    <property type="project" value="UniProtKB-UniRule"/>
</dbReference>
<dbReference type="GO" id="GO:0004797">
    <property type="term" value="F:thymidine kinase activity"/>
    <property type="evidence" value="ECO:0007669"/>
    <property type="project" value="UniProtKB-UniRule"/>
</dbReference>
<dbReference type="GO" id="GO:0008270">
    <property type="term" value="F:zinc ion binding"/>
    <property type="evidence" value="ECO:0007669"/>
    <property type="project" value="UniProtKB-UniRule"/>
</dbReference>
<dbReference type="GO" id="GO:0071897">
    <property type="term" value="P:DNA biosynthetic process"/>
    <property type="evidence" value="ECO:0007669"/>
    <property type="project" value="UniProtKB-KW"/>
</dbReference>
<dbReference type="GO" id="GO:0046104">
    <property type="term" value="P:thymidine metabolic process"/>
    <property type="evidence" value="ECO:0007669"/>
    <property type="project" value="TreeGrafter"/>
</dbReference>
<dbReference type="Gene3D" id="3.30.60.20">
    <property type="match status" value="1"/>
</dbReference>
<dbReference type="Gene3D" id="3.40.50.300">
    <property type="entry name" value="P-loop containing nucleotide triphosphate hydrolases"/>
    <property type="match status" value="1"/>
</dbReference>
<dbReference type="HAMAP" id="MF_00124">
    <property type="entry name" value="Thymidine_kinase"/>
    <property type="match status" value="1"/>
</dbReference>
<dbReference type="InterPro" id="IPR027417">
    <property type="entry name" value="P-loop_NTPase"/>
</dbReference>
<dbReference type="InterPro" id="IPR001267">
    <property type="entry name" value="Thymidine_kinase"/>
</dbReference>
<dbReference type="InterPro" id="IPR020633">
    <property type="entry name" value="Thymidine_kinase_CS"/>
</dbReference>
<dbReference type="NCBIfam" id="NF003296">
    <property type="entry name" value="PRK04296.1-1"/>
    <property type="match status" value="1"/>
</dbReference>
<dbReference type="PANTHER" id="PTHR11441">
    <property type="entry name" value="THYMIDINE KINASE"/>
    <property type="match status" value="1"/>
</dbReference>
<dbReference type="PANTHER" id="PTHR11441:SF0">
    <property type="entry name" value="THYMIDINE KINASE, CYTOSOLIC"/>
    <property type="match status" value="1"/>
</dbReference>
<dbReference type="Pfam" id="PF00265">
    <property type="entry name" value="TK"/>
    <property type="match status" value="1"/>
</dbReference>
<dbReference type="PIRSF" id="PIRSF035805">
    <property type="entry name" value="TK_cell"/>
    <property type="match status" value="1"/>
</dbReference>
<dbReference type="SUPFAM" id="SSF57716">
    <property type="entry name" value="Glucocorticoid receptor-like (DNA-binding domain)"/>
    <property type="match status" value="1"/>
</dbReference>
<dbReference type="SUPFAM" id="SSF52540">
    <property type="entry name" value="P-loop containing nucleoside triphosphate hydrolases"/>
    <property type="match status" value="1"/>
</dbReference>
<dbReference type="PROSITE" id="PS00603">
    <property type="entry name" value="TK_CELLULAR_TYPE"/>
    <property type="match status" value="1"/>
</dbReference>
<name>KITH_COPPD</name>
<accession>B5Y8S5</accession>
<keyword id="KW-0067">ATP-binding</keyword>
<keyword id="KW-0963">Cytoplasm</keyword>
<keyword id="KW-0237">DNA synthesis</keyword>
<keyword id="KW-0418">Kinase</keyword>
<keyword id="KW-0479">Metal-binding</keyword>
<keyword id="KW-0547">Nucleotide-binding</keyword>
<keyword id="KW-1185">Reference proteome</keyword>
<keyword id="KW-0808">Transferase</keyword>
<keyword id="KW-0862">Zinc</keyword>
<reference key="1">
    <citation type="submission" date="2008-08" db="EMBL/GenBank/DDBJ databases">
        <title>The complete genome sequence of Coprothermobacter proteolyticus strain ATCC 5245 / DSM 5265 / BT.</title>
        <authorList>
            <person name="Dodson R.J."/>
            <person name="Durkin A.S."/>
            <person name="Wu M."/>
            <person name="Eisen J."/>
            <person name="Sutton G."/>
        </authorList>
    </citation>
    <scope>NUCLEOTIDE SEQUENCE [LARGE SCALE GENOMIC DNA]</scope>
    <source>
        <strain>ATCC 35245 / DSM 5265 / OCM 4 / BT</strain>
    </source>
</reference>
<proteinExistence type="inferred from homology"/>